<evidence type="ECO:0000255" key="1">
    <source>
        <dbReference type="HAMAP-Rule" id="MF_00161"/>
    </source>
</evidence>
<gene>
    <name evidence="1" type="primary">lspA</name>
    <name type="ordered locus">BQ00090</name>
</gene>
<sequence length="167" mass="19631">MTRKSFSFFLLGLILTVGIDQTVKYWIMHNMLLGTEIPLLPFLSLYHVRNSGIAFSFFSSFSHWGLIALTLIILIFLLWLWKNTEYNKFLSRFGLTLIIGGAIGNLIDRICFYYVIDYILFYIDDIFYFAVFNLADTFITLGVIAIVTEELRIWIKEKRHSKRTFSR</sequence>
<dbReference type="EC" id="3.4.23.36" evidence="1"/>
<dbReference type="EMBL" id="BX897700">
    <property type="protein sequence ID" value="CAF25516.1"/>
    <property type="molecule type" value="Genomic_DNA"/>
</dbReference>
<dbReference type="RefSeq" id="WP_011178848.1">
    <property type="nucleotide sequence ID" value="NC_005955.1"/>
</dbReference>
<dbReference type="SMR" id="Q6G1A8"/>
<dbReference type="GeneID" id="56532401"/>
<dbReference type="KEGG" id="bqu:BQ00090"/>
<dbReference type="eggNOG" id="COG0597">
    <property type="taxonomic scope" value="Bacteria"/>
</dbReference>
<dbReference type="HOGENOM" id="CLU_083252_4_3_5"/>
<dbReference type="OrthoDB" id="9810259at2"/>
<dbReference type="UniPathway" id="UPA00665"/>
<dbReference type="Proteomes" id="UP000000597">
    <property type="component" value="Chromosome"/>
</dbReference>
<dbReference type="GO" id="GO:0005886">
    <property type="term" value="C:plasma membrane"/>
    <property type="evidence" value="ECO:0007669"/>
    <property type="project" value="UniProtKB-SubCell"/>
</dbReference>
<dbReference type="GO" id="GO:0004190">
    <property type="term" value="F:aspartic-type endopeptidase activity"/>
    <property type="evidence" value="ECO:0007669"/>
    <property type="project" value="UniProtKB-UniRule"/>
</dbReference>
<dbReference type="GO" id="GO:0006508">
    <property type="term" value="P:proteolysis"/>
    <property type="evidence" value="ECO:0007669"/>
    <property type="project" value="UniProtKB-KW"/>
</dbReference>
<dbReference type="HAMAP" id="MF_00161">
    <property type="entry name" value="LspA"/>
    <property type="match status" value="1"/>
</dbReference>
<dbReference type="InterPro" id="IPR001872">
    <property type="entry name" value="Peptidase_A8"/>
</dbReference>
<dbReference type="NCBIfam" id="TIGR00077">
    <property type="entry name" value="lspA"/>
    <property type="match status" value="1"/>
</dbReference>
<dbReference type="PANTHER" id="PTHR33695">
    <property type="entry name" value="LIPOPROTEIN SIGNAL PEPTIDASE"/>
    <property type="match status" value="1"/>
</dbReference>
<dbReference type="PANTHER" id="PTHR33695:SF1">
    <property type="entry name" value="LIPOPROTEIN SIGNAL PEPTIDASE"/>
    <property type="match status" value="1"/>
</dbReference>
<dbReference type="Pfam" id="PF01252">
    <property type="entry name" value="Peptidase_A8"/>
    <property type="match status" value="1"/>
</dbReference>
<dbReference type="PRINTS" id="PR00781">
    <property type="entry name" value="LIPOSIGPTASE"/>
</dbReference>
<dbReference type="PROSITE" id="PS00855">
    <property type="entry name" value="SPASE_II"/>
    <property type="match status" value="1"/>
</dbReference>
<proteinExistence type="inferred from homology"/>
<protein>
    <recommendedName>
        <fullName evidence="1">Lipoprotein signal peptidase</fullName>
        <ecNumber evidence="1">3.4.23.36</ecNumber>
    </recommendedName>
    <alternativeName>
        <fullName evidence="1">Prolipoprotein signal peptidase</fullName>
    </alternativeName>
    <alternativeName>
        <fullName evidence="1">Signal peptidase II</fullName>
        <shortName evidence="1">SPase II</shortName>
    </alternativeName>
</protein>
<comment type="function">
    <text evidence="1">This protein specifically catalyzes the removal of signal peptides from prolipoproteins.</text>
</comment>
<comment type="catalytic activity">
    <reaction evidence="1">
        <text>Release of signal peptides from bacterial membrane prolipoproteins. Hydrolyzes -Xaa-Yaa-Zaa-|-(S,diacylglyceryl)Cys-, in which Xaa is hydrophobic (preferably Leu), and Yaa (Ala or Ser) and Zaa (Gly or Ala) have small, neutral side chains.</text>
        <dbReference type="EC" id="3.4.23.36"/>
    </reaction>
</comment>
<comment type="pathway">
    <text evidence="1">Protein modification; lipoprotein biosynthesis (signal peptide cleavage).</text>
</comment>
<comment type="subcellular location">
    <subcellularLocation>
        <location evidence="1">Cell inner membrane</location>
        <topology evidence="1">Multi-pass membrane protein</topology>
    </subcellularLocation>
</comment>
<comment type="similarity">
    <text evidence="1">Belongs to the peptidase A8 family.</text>
</comment>
<reference key="1">
    <citation type="journal article" date="2004" name="Proc. Natl. Acad. Sci. U.S.A.">
        <title>The louse-borne human pathogen Bartonella quintana is a genomic derivative of the zoonotic agent Bartonella henselae.</title>
        <authorList>
            <person name="Alsmark U.C.M."/>
            <person name="Frank A.C."/>
            <person name="Karlberg E.O."/>
            <person name="Legault B.-A."/>
            <person name="Ardell D.H."/>
            <person name="Canbaeck B."/>
            <person name="Eriksson A.-S."/>
            <person name="Naeslund A.K."/>
            <person name="Handley S.A."/>
            <person name="Huvet M."/>
            <person name="La Scola B."/>
            <person name="Holmberg M."/>
            <person name="Andersson S.G.E."/>
        </authorList>
    </citation>
    <scope>NUCLEOTIDE SEQUENCE [LARGE SCALE GENOMIC DNA]</scope>
    <source>
        <strain>Toulouse</strain>
    </source>
</reference>
<organism>
    <name type="scientific">Bartonella quintana (strain Toulouse)</name>
    <name type="common">Rochalimaea quintana</name>
    <dbReference type="NCBI Taxonomy" id="283165"/>
    <lineage>
        <taxon>Bacteria</taxon>
        <taxon>Pseudomonadati</taxon>
        <taxon>Pseudomonadota</taxon>
        <taxon>Alphaproteobacteria</taxon>
        <taxon>Hyphomicrobiales</taxon>
        <taxon>Bartonellaceae</taxon>
        <taxon>Bartonella</taxon>
    </lineage>
</organism>
<accession>Q6G1A8</accession>
<keyword id="KW-0064">Aspartyl protease</keyword>
<keyword id="KW-0997">Cell inner membrane</keyword>
<keyword id="KW-1003">Cell membrane</keyword>
<keyword id="KW-0378">Hydrolase</keyword>
<keyword id="KW-0472">Membrane</keyword>
<keyword id="KW-0645">Protease</keyword>
<keyword id="KW-0812">Transmembrane</keyword>
<keyword id="KW-1133">Transmembrane helix</keyword>
<name>LSPA_BARQU</name>
<feature type="chain" id="PRO_1000058231" description="Lipoprotein signal peptidase">
    <location>
        <begin position="1"/>
        <end position="167"/>
    </location>
</feature>
<feature type="transmembrane region" description="Helical" evidence="1">
    <location>
        <begin position="8"/>
        <end position="28"/>
    </location>
</feature>
<feature type="transmembrane region" description="Helical" evidence="1">
    <location>
        <begin position="61"/>
        <end position="81"/>
    </location>
</feature>
<feature type="transmembrane region" description="Helical" evidence="1">
    <location>
        <begin position="93"/>
        <end position="113"/>
    </location>
</feature>
<feature type="transmembrane region" description="Helical" evidence="1">
    <location>
        <begin position="126"/>
        <end position="146"/>
    </location>
</feature>
<feature type="active site" evidence="1">
    <location>
        <position position="117"/>
    </location>
</feature>
<feature type="active site" evidence="1">
    <location>
        <position position="136"/>
    </location>
</feature>